<evidence type="ECO:0000250" key="1"/>
<evidence type="ECO:0000255" key="2">
    <source>
        <dbReference type="PROSITE-ProRule" id="PRU01191"/>
    </source>
</evidence>
<evidence type="ECO:0000256" key="3">
    <source>
        <dbReference type="SAM" id="MobiDB-lite"/>
    </source>
</evidence>
<evidence type="ECO:0000269" key="4">
    <source>
    </source>
</evidence>
<evidence type="ECO:0000269" key="5">
    <source>
    </source>
</evidence>
<evidence type="ECO:0000305" key="6"/>
<accession>Q9ST48</accession>
<accession>Q93V57</accession>
<accession>Q93VT0</accession>
<accession>Q93VT1</accession>
<accession>Q93VT2</accession>
<accession>Q93WG1</accession>
<accession>Q93WI7</accession>
<accession>Q945I5</accession>
<accession>Q945I6</accession>
<accession>Q945I7</accession>
<accession>Q945I8</accession>
<accession>Q945I9</accession>
<accession>Q945J0</accession>
<accession>Q945J1</accession>
<accession>Q945J2</accession>
<accession>Q945J3</accession>
<accession>Q945J4</accession>
<accession>Q945J5</accession>
<accession>Q945J6</accession>
<feature type="chain" id="PRO_0000132246" description="DELLA protein DWARF8">
    <location>
        <begin position="1"/>
        <end position="630"/>
    </location>
</feature>
<feature type="domain" description="GRAS" evidence="2">
    <location>
        <begin position="234"/>
        <end position="623"/>
    </location>
</feature>
<feature type="region of interest" description="Disordered" evidence="3">
    <location>
        <begin position="1"/>
        <end position="35"/>
    </location>
</feature>
<feature type="region of interest" description="Disordered" evidence="3">
    <location>
        <begin position="161"/>
        <end position="222"/>
    </location>
</feature>
<feature type="region of interest" description="Leucine repeat I (LRI)" evidence="2">
    <location>
        <begin position="241"/>
        <end position="297"/>
    </location>
</feature>
<feature type="region of interest" description="VHIID" evidence="2">
    <location>
        <begin position="316"/>
        <end position="381"/>
    </location>
</feature>
<feature type="region of interest" description="Leucine repeat II (LRII)" evidence="2">
    <location>
        <begin position="395"/>
        <end position="427"/>
    </location>
</feature>
<feature type="region of interest" description="PFYRE" evidence="2">
    <location>
        <begin position="443"/>
        <end position="544"/>
    </location>
</feature>
<feature type="region of interest" description="SAW" evidence="2">
    <location>
        <begin position="547"/>
        <end position="623"/>
    </location>
</feature>
<feature type="short sequence motif" description="DELLA motif">
    <location>
        <begin position="38"/>
        <end position="42"/>
    </location>
</feature>
<feature type="short sequence motif" description="LxCxE motif" evidence="2">
    <location>
        <begin position="248"/>
        <end position="252"/>
    </location>
</feature>
<feature type="short sequence motif" description="VHIID" evidence="2">
    <location>
        <begin position="347"/>
        <end position="351"/>
    </location>
</feature>
<feature type="short sequence motif" description="LXXLL motif" evidence="2">
    <location>
        <begin position="451"/>
        <end position="455"/>
    </location>
</feature>
<feature type="compositionally biased region" description="Low complexity" evidence="3">
    <location>
        <begin position="165"/>
        <end position="176"/>
    </location>
</feature>
<feature type="compositionally biased region" description="Low complexity" evidence="3">
    <location>
        <begin position="191"/>
        <end position="222"/>
    </location>
</feature>
<feature type="sequence variant" description="In strain: cv. CMV3." evidence="5">
    <original>G</original>
    <variation>D</variation>
    <location>
        <position position="12"/>
    </location>
</feature>
<feature type="sequence variant" description="In strain: cv. CML258, cv. CML5, cv. NC354 and cv. Q6199." evidence="5">
    <original>G</original>
    <variation>GG</variation>
    <location>
        <position position="13"/>
    </location>
</feature>
<feature type="sequence variant" description="In strain: cv. H99, cv. NC260, cv. PA91, cv. U267Y, cv. W64A and cv. WF9." evidence="5">
    <original>G</original>
    <variation>V</variation>
    <location>
        <position position="28"/>
    </location>
</feature>
<feature type="sequence variant" description="In D8-d1; induces a dwarf phenotype." evidence="4">
    <original>DVAQK</original>
    <variation>G</variation>
    <location>
        <begin position="55"/>
        <end position="59"/>
    </location>
</feature>
<feature type="sequence variant" description="In D8-2023; induces a dwarf phenotype." evidence="4">
    <location>
        <begin position="87"/>
        <end position="98"/>
    </location>
</feature>
<feature type="sequence variant" description="In strain: cv. CM7." evidence="5">
    <location>
        <position position="231"/>
    </location>
</feature>
<feature type="sequence variant" description="In strain: cv. MO24W." evidence="5">
    <original>Q</original>
    <variation>H</variation>
    <location>
        <position position="255"/>
    </location>
</feature>
<feature type="sequence variant" description="In strain: cv. B103." evidence="5">
    <original>S</original>
    <variation>R</variation>
    <location>
        <position position="304"/>
    </location>
</feature>
<feature type="sequence variant" description="In strain: cv. EP1." evidence="5">
    <original>T</original>
    <variation>I</variation>
    <location>
        <position position="390"/>
    </location>
</feature>
<feature type="sequence variant" description="In strain: cv. CMV3." evidence="5">
    <original>Y</original>
    <variation>C</variation>
    <location>
        <position position="413"/>
    </location>
</feature>
<feature type="sequence variant" description="In strain: cv. GT112." evidence="5">
    <original>I</original>
    <variation>T</variation>
    <location>
        <position position="475"/>
    </location>
</feature>
<feature type="sequence variant" description="In strain: cv. H99." evidence="5">
    <original>E</original>
    <variation>K</variation>
    <location>
        <position position="480"/>
    </location>
</feature>
<feature type="sequence variant" description="In strain: cv. NC260." evidence="5">
    <original>N</original>
    <variation>S</variation>
    <location>
        <position position="484"/>
    </location>
</feature>
<feature type="sequence variant" description="In strain: cv. KUI43." evidence="5">
    <original>N</original>
    <variation>D</variation>
    <location>
        <position position="486"/>
    </location>
</feature>
<feature type="sequence variant" description="In strain: cv. NC320." evidence="5">
    <original>Y</original>
    <variation>H</variation>
    <location>
        <position position="500"/>
    </location>
</feature>
<feature type="sequence variant" description="In strain: cv. NC250." evidence="5">
    <original>F</original>
    <variation>S</variation>
    <location>
        <position position="505"/>
    </location>
</feature>
<feature type="sequence variant" description="In strain: cv. A619, cv. CM105, cv. CM174, cv. CMV3, cv. F7, cv. F2834T, cv. N192, cv. Ohio 43 and cv. P39." evidence="5">
    <location>
        <begin position="510"/>
        <end position="511"/>
    </location>
</feature>
<feature type="sequence variant" description="In strain: cv. A619, cv. CM105, cv. CM7, cv. CM174, cv. CMV3, cv. F2834T, cv. F7, cv. N192, cv. Ohio 43 and cv. P39." evidence="5">
    <original>T</original>
    <variation>A</variation>
    <location>
        <position position="519"/>
    </location>
</feature>
<feature type="sequence variant" description="In strain: cv. F2." evidence="5">
    <original>M</original>
    <variation>K</variation>
    <location>
        <position position="533"/>
    </location>
</feature>
<feature type="sequence variant" description="In strain: cv. M37W and cv. Tzi10." evidence="5">
    <original>G</original>
    <variation>S</variation>
    <location>
        <position position="578"/>
    </location>
</feature>
<gene>
    <name type="primary">D8</name>
</gene>
<protein>
    <recommendedName>
        <fullName>DELLA protein DWARF8</fullName>
        <shortName>Protein dwarf-8</shortName>
    </recommendedName>
</protein>
<organism>
    <name type="scientific">Zea mays</name>
    <name type="common">Maize</name>
    <dbReference type="NCBI Taxonomy" id="4577"/>
    <lineage>
        <taxon>Eukaryota</taxon>
        <taxon>Viridiplantae</taxon>
        <taxon>Streptophyta</taxon>
        <taxon>Embryophyta</taxon>
        <taxon>Tracheophyta</taxon>
        <taxon>Spermatophyta</taxon>
        <taxon>Magnoliopsida</taxon>
        <taxon>Liliopsida</taxon>
        <taxon>Poales</taxon>
        <taxon>Poaceae</taxon>
        <taxon>PACMAD clade</taxon>
        <taxon>Panicoideae</taxon>
        <taxon>Andropogonodae</taxon>
        <taxon>Andropogoneae</taxon>
        <taxon>Tripsacinae</taxon>
        <taxon>Zea</taxon>
    </lineage>
</organism>
<comment type="function">
    <text>Probable transcriptional regulator that acts as a repressor of the gibberellin (GA) signaling pathway. Probably acts by participating in large multiprotein complexes that repress transcription of GA-inducible genes. Upon GA application, it is degraded by the proteasome, allowing the GA signaling pathway.</text>
</comment>
<comment type="subcellular location">
    <subcellularLocation>
        <location evidence="1">Nucleus</location>
    </subcellularLocation>
</comment>
<comment type="domain">
    <text evidence="6">The DELLA motif is required for its GA-induced degradation.</text>
</comment>
<comment type="PTM">
    <text evidence="1">Phosphorylated.</text>
</comment>
<comment type="PTM">
    <text evidence="6">Ubiquitinated. Upon GA application it is ubiquitinated, leading to its subsequent degradation (Probable).</text>
</comment>
<comment type="polymorphism">
    <text>Variations between cultivars affect flowering time and plant height.</text>
</comment>
<comment type="biotechnology">
    <text>This gene, also known as the 'green revolution gene' has been introduced by conventional breeding procedures into several cultivars. It produces shorter plants, increase grain yield at the expense of straw biomass, and are more resistant to damage by wind and rain.</text>
</comment>
<comment type="similarity">
    <text evidence="6">Belongs to the GRAS family. DELLA subfamily.</text>
</comment>
<comment type="online information" name="Protein Spotlight">
    <link uri="https://www.proteinspotlight.org/back_issues/070"/>
    <text>All things dwarfed and beautiful - Issue 70 of May 2006</text>
</comment>
<keyword id="KW-0939">Gibberellin signaling pathway</keyword>
<keyword id="KW-0539">Nucleus</keyword>
<keyword id="KW-0597">Phosphoprotein</keyword>
<keyword id="KW-1185">Reference proteome</keyword>
<keyword id="KW-0678">Repressor</keyword>
<keyword id="KW-0804">Transcription</keyword>
<keyword id="KW-0805">Transcription regulation</keyword>
<keyword id="KW-0832">Ubl conjugation</keyword>
<reference key="1">
    <citation type="journal article" date="1999" name="Nature">
        <title>'Green revolution' genes encode mutant gibberellin response modulators.</title>
        <authorList>
            <person name="Peng J."/>
            <person name="Richards D.E."/>
            <person name="Hartley N.M."/>
            <person name="Murphy G.P."/>
            <person name="Devos K.M."/>
            <person name="Flintham J.E."/>
            <person name="Beales J."/>
            <person name="Fish L.J."/>
            <person name="Worland A.J."/>
            <person name="Pelica F."/>
            <person name="Sudhakar D."/>
            <person name="Christou P."/>
            <person name="Snape J.W."/>
            <person name="Gale M.D."/>
            <person name="Harberd N.P."/>
        </authorList>
    </citation>
    <scope>NUCLEOTIDE SEQUENCE [GENOMIC DNA]</scope>
    <scope>VARIANTS 55-ASP--LYS-59 DELINS GLY AND 87-LEU--ASP-98 DEL</scope>
</reference>
<reference key="2">
    <citation type="journal article" date="2001" name="Proc. Natl. Acad. Sci. U.S.A.">
        <title>Structure of linkage disequilibrium and phenotypic associations in the maize genome.</title>
        <authorList>
            <person name="Remington D.L."/>
            <person name="Thornsberry J.M."/>
            <person name="Matsuoka Y."/>
            <person name="Wilson L.M."/>
            <person name="Whitt S.R."/>
            <person name="Doebley J."/>
            <person name="Kresovich S."/>
            <person name="Goodman M.M."/>
            <person name="Buckler E.S. IV"/>
        </authorList>
    </citation>
    <scope>NUCLEOTIDE SEQUENCE [GENOMIC DNA] OF 1-581</scope>
    <scope>VARIANTS ASP-12; GLY-13 INS; VAL-28; VAL-231 DEL; HIS-255; ARG-304; ILE-390; CYS-413; THR-475; LYS-480; SER-484; ASP-486; HIS-500; SER-505; 510-GLY-ALA-511 DEL; ALA-519; LYS-533 AND SER-578</scope>
    <source>
        <strain>cv. 38-11</strain>
        <strain>cv. A272</strain>
        <strain>cv. A619</strain>
        <strain>cv. A632</strain>
        <strain>cv. B103</strain>
        <strain>cv. B104</strain>
        <strain>cv. B37</strain>
        <strain>cv. B68</strain>
        <strain>cv. B73</strain>
        <strain>cv. C103</strain>
        <strain>cv. CM105</strain>
        <strain>cv. CM174</strain>
        <strain>cv. CML258</strain>
        <strain>cv. CML281</strain>
        <strain>cv. CML5</strain>
        <strain>cv. CMV3</strain>
        <strain>cv. EP1</strain>
        <strain>cv. F2</strain>
        <strain>cv. F2834T</strain>
        <strain>cv. F7</strain>
        <strain>cv. GT112</strain>
        <strain>cv. H99</strain>
        <strain>cv. I137TN</strain>
        <strain>cv. I29</strain>
        <strain>cv. KUI21</strain>
        <strain>cv. KUI3</strain>
        <strain>cv. KUI43</strain>
        <strain>cv. M162W</strain>
        <strain>cv. M37W</strain>
        <strain>cv. Missouri 17</strain>
        <strain>cv. Missouri 24W</strain>
        <strain>cv. MS153</strain>
        <strain>cv. N192</strain>
        <strain>cv. ND246</strain>
        <strain>cv. North Carolina 250</strain>
        <strain>cv. North Carolina 260</strain>
        <strain>cv. North Carolina 304</strain>
        <strain>cv. North Carolina 320</strain>
        <strain>cv. North Carolina 348</strain>
        <strain>cv. North Carolina 350</strain>
        <strain>cv. North Carolina 352</strain>
        <strain>cv. North Carolina 354</strain>
        <strain>cv. Ohio 43</strain>
        <strain>cv. Ohio 7B</strain>
        <strain>cv. P39</strain>
        <strain>cv. PA91</strain>
        <strain>cv. Q6199</strain>
        <strain>cv. SA24</strain>
        <strain>cv. SC213</strain>
        <strain>cv. SG18</strain>
        <strain>cv. Tennessee 232</strain>
        <strain>cv. Texas 601</strain>
        <strain>cv. Tzi10</strain>
        <strain>cv. Tzi18</strain>
        <strain>cv. U267Y</strain>
        <strain>cv. WF9</strain>
        <strain>cv. Wisconsin 117HT</strain>
        <strain>cv. Wisconsin 182B</strain>
        <strain>cv. Wisconsin 64A</strain>
    </source>
</reference>
<reference key="3">
    <citation type="journal article" date="2001" name="Proc. Natl. Acad. Sci. U.S.A.">
        <title>Patterns of DNA sequence polymorphism along chromosome 1 of maize (Zea mays ssp. mays L.).</title>
        <authorList>
            <person name="Tenaillon M.I."/>
            <person name="Sawkins M.C."/>
            <person name="Long A.D."/>
            <person name="Gaut R.L."/>
            <person name="Doebley J.F."/>
            <person name="Gaut B.S."/>
        </authorList>
    </citation>
    <scope>NUCLEOTIDE SEQUENCE [GENOMIC DNA] OF 169-434</scope>
</reference>
<reference key="4">
    <citation type="submission" date="2005-07" db="EMBL/GenBank/DDBJ databases">
        <title>Maize full-length cDNA project.</title>
        <authorList>
            <person name="Kim H."/>
            <person name="Collura K."/>
            <person name="Wissotski M."/>
            <person name="Smart D."/>
            <person name="Kudrna D."/>
            <person name="Muller C."/>
            <person name="Rao K."/>
            <person name="Haller K."/>
            <person name="Wing R."/>
            <person name="Soderlund C."/>
            <person name="Walbot V."/>
            <person name="Yu Y."/>
        </authorList>
    </citation>
    <scope>NUCLEOTIDE SEQUENCE [MRNA] OF 477-630</scope>
</reference>
<reference key="5">
    <citation type="journal article" date="2001" name="Nat. Genet.">
        <title>Dwarf8 polymorphisms associate with variation in flowering time.</title>
        <authorList>
            <person name="Thornsberry J.M."/>
            <person name="Goodman M.M."/>
            <person name="Doebley J."/>
            <person name="Kresovich S."/>
            <person name="Nielsen D."/>
            <person name="Buckler E.S. IV"/>
        </authorList>
    </citation>
    <scope>POLYMORPHISM</scope>
</reference>
<reference key="6">
    <citation type="journal article" date="2005" name="Theor. Appl. Genet.">
        <title>Validation of Dwarf8 polymorphisms associated with flowering time in elite European inbred lines of maize (Zea mays L.).</title>
        <authorList>
            <person name="Andersen J.R."/>
            <person name="Schrag T."/>
            <person name="Melchinger A.E."/>
            <person name="Zein I."/>
            <person name="Luebberstedt T."/>
        </authorList>
    </citation>
    <scope>POLYMORPHISM</scope>
</reference>
<sequence>MKREYQDAGGSGGDMGSSKDKMMAAAAGAGEQEEEDVDELLAALGYKVRSSDMADVAQKLEQLEMAMGMGGVGGAGATADDGFVSHLATDTVHYNPSDLSSWVESMLSELNAPPAPLPPATPAPRLASTSSTVTSGAAAGAGYFDLPPAVDSSSSTYALKPIPSPVAAPSADPSTDSAREPKRMRTGGGSTSSSSSSSSSMDGGRTRSSVVEAAPPATQASAAANGPAVPVVVVDTQEAGIRLVHALLACAEAVQQENFSAAEALVKQIPMLASSQGGAMRKVAAYFGEALARRVYRFRPPPDSSLLDAAFADLLHAHFYESCPYLKFAHFTANQAILEAFAGCRRVHVVDFGIKQGMQWPALLQALALRPGGPPSFRLTGVGPPQPDETDALQQVGWKLAQFAHTIRVDFQYRGLVAATLADLEPFMLQPEGDDTDDEPEVIAVNSVFELHRLLAQPGALEKVLGTVRAVRPRIVTVVEQEANHNSGTFLDRFTESLHYYSTMFDSLEGAGAGSGQSTDASPAAAGGTDQVMSEVYLGRQICNVVACEGAERTERHETLGQWRSRLGGSGFAPVHLGSNAYKQASTLLALFAGGDGYRVEEKDGCLTLGWHTRPLIATSAWRVAAAAAP</sequence>
<name>DWRF8_MAIZE</name>
<proteinExistence type="evidence at protein level"/>
<dbReference type="EMBL" id="AJ242530">
    <property type="protein sequence ID" value="CAB51557.1"/>
    <property type="molecule type" value="Genomic_DNA"/>
</dbReference>
<dbReference type="EMBL" id="AF413112">
    <property type="protein sequence ID" value="AAL10302.1"/>
    <property type="molecule type" value="Genomic_DNA"/>
</dbReference>
<dbReference type="EMBL" id="AF413113">
    <property type="protein sequence ID" value="AAL10303.1"/>
    <property type="molecule type" value="Genomic_DNA"/>
</dbReference>
<dbReference type="EMBL" id="AF413114">
    <property type="protein sequence ID" value="AAL10304.1"/>
    <property type="molecule type" value="Genomic_DNA"/>
</dbReference>
<dbReference type="EMBL" id="AF413115">
    <property type="protein sequence ID" value="AAL10305.1"/>
    <property type="molecule type" value="Genomic_DNA"/>
</dbReference>
<dbReference type="EMBL" id="AF413116">
    <property type="protein sequence ID" value="AAL10306.1"/>
    <property type="molecule type" value="Genomic_DNA"/>
</dbReference>
<dbReference type="EMBL" id="AF413117">
    <property type="protein sequence ID" value="AAL10307.1"/>
    <property type="molecule type" value="Genomic_DNA"/>
</dbReference>
<dbReference type="EMBL" id="AF413118">
    <property type="protein sequence ID" value="AAL10308.1"/>
    <property type="molecule type" value="Genomic_DNA"/>
</dbReference>
<dbReference type="EMBL" id="AF413119">
    <property type="protein sequence ID" value="AAL10309.1"/>
    <property type="molecule type" value="Genomic_DNA"/>
</dbReference>
<dbReference type="EMBL" id="AF413120">
    <property type="protein sequence ID" value="AAL10310.1"/>
    <property type="molecule type" value="Genomic_DNA"/>
</dbReference>
<dbReference type="EMBL" id="AF413121">
    <property type="protein sequence ID" value="AAL10311.1"/>
    <property type="molecule type" value="Genomic_DNA"/>
</dbReference>
<dbReference type="EMBL" id="AF413122">
    <property type="protein sequence ID" value="AAL10312.1"/>
    <property type="molecule type" value="Genomic_DNA"/>
</dbReference>
<dbReference type="EMBL" id="AF413123">
    <property type="protein sequence ID" value="AAL10313.1"/>
    <property type="molecule type" value="Genomic_DNA"/>
</dbReference>
<dbReference type="EMBL" id="AF413124">
    <property type="protein sequence ID" value="AAL10314.1"/>
    <property type="molecule type" value="Genomic_DNA"/>
</dbReference>
<dbReference type="EMBL" id="AF413125">
    <property type="protein sequence ID" value="AAL10315.1"/>
    <property type="molecule type" value="Genomic_DNA"/>
</dbReference>
<dbReference type="EMBL" id="AF413126">
    <property type="protein sequence ID" value="AAL10316.1"/>
    <property type="molecule type" value="Genomic_DNA"/>
</dbReference>
<dbReference type="EMBL" id="AF413127">
    <property type="protein sequence ID" value="AAL10317.1"/>
    <property type="molecule type" value="Genomic_DNA"/>
</dbReference>
<dbReference type="EMBL" id="AF413128">
    <property type="protein sequence ID" value="AAL10318.1"/>
    <property type="molecule type" value="Genomic_DNA"/>
</dbReference>
<dbReference type="EMBL" id="AF413129">
    <property type="protein sequence ID" value="AAL10319.1"/>
    <property type="molecule type" value="Genomic_DNA"/>
</dbReference>
<dbReference type="EMBL" id="AF413130">
    <property type="protein sequence ID" value="AAL10320.1"/>
    <property type="molecule type" value="Genomic_DNA"/>
</dbReference>
<dbReference type="EMBL" id="AF413131">
    <property type="protein sequence ID" value="AAL10321.1"/>
    <property type="molecule type" value="Genomic_DNA"/>
</dbReference>
<dbReference type="EMBL" id="AF413132">
    <property type="protein sequence ID" value="AAL10322.1"/>
    <property type="molecule type" value="Genomic_DNA"/>
</dbReference>
<dbReference type="EMBL" id="AF413133">
    <property type="protein sequence ID" value="AAL10323.1"/>
    <property type="molecule type" value="Genomic_DNA"/>
</dbReference>
<dbReference type="EMBL" id="AF413134">
    <property type="protein sequence ID" value="AAL10324.1"/>
    <property type="molecule type" value="Genomic_DNA"/>
</dbReference>
<dbReference type="EMBL" id="AF413135">
    <property type="protein sequence ID" value="AAL10325.1"/>
    <property type="molecule type" value="Genomic_DNA"/>
</dbReference>
<dbReference type="EMBL" id="AF413136">
    <property type="protein sequence ID" value="AAL10326.1"/>
    <property type="molecule type" value="Genomic_DNA"/>
</dbReference>
<dbReference type="EMBL" id="AF413137">
    <property type="protein sequence ID" value="AAL10327.1"/>
    <property type="molecule type" value="Genomic_DNA"/>
</dbReference>
<dbReference type="EMBL" id="AF413138">
    <property type="protein sequence ID" value="AAL10328.1"/>
    <property type="molecule type" value="Genomic_DNA"/>
</dbReference>
<dbReference type="EMBL" id="AF413139">
    <property type="protein sequence ID" value="AAL10329.1"/>
    <property type="molecule type" value="Genomic_DNA"/>
</dbReference>
<dbReference type="EMBL" id="AF413140">
    <property type="protein sequence ID" value="AAL10330.1"/>
    <property type="molecule type" value="Genomic_DNA"/>
</dbReference>
<dbReference type="EMBL" id="AF413141">
    <property type="protein sequence ID" value="AAL10331.1"/>
    <property type="molecule type" value="Genomic_DNA"/>
</dbReference>
<dbReference type="EMBL" id="AF413142">
    <property type="protein sequence ID" value="AAL10332.1"/>
    <property type="molecule type" value="Genomic_DNA"/>
</dbReference>
<dbReference type="EMBL" id="AF413143">
    <property type="protein sequence ID" value="AAL10333.1"/>
    <property type="molecule type" value="Genomic_DNA"/>
</dbReference>
<dbReference type="EMBL" id="AF413144">
    <property type="protein sequence ID" value="AAL10334.1"/>
    <property type="molecule type" value="Genomic_DNA"/>
</dbReference>
<dbReference type="EMBL" id="AF413145">
    <property type="protein sequence ID" value="AAL10335.1"/>
    <property type="molecule type" value="Genomic_DNA"/>
</dbReference>
<dbReference type="EMBL" id="AF413146">
    <property type="protein sequence ID" value="AAL10336.1"/>
    <property type="molecule type" value="Genomic_DNA"/>
</dbReference>
<dbReference type="EMBL" id="AF413147">
    <property type="protein sequence ID" value="AAL10337.1"/>
    <property type="molecule type" value="Genomic_DNA"/>
</dbReference>
<dbReference type="EMBL" id="AF413148">
    <property type="protein sequence ID" value="AAL10338.1"/>
    <property type="molecule type" value="Genomic_DNA"/>
</dbReference>
<dbReference type="EMBL" id="AF413149">
    <property type="protein sequence ID" value="AAL10339.1"/>
    <property type="molecule type" value="Genomic_DNA"/>
</dbReference>
<dbReference type="EMBL" id="AF413150">
    <property type="protein sequence ID" value="AAL10340.1"/>
    <property type="molecule type" value="Genomic_DNA"/>
</dbReference>
<dbReference type="EMBL" id="AF413151">
    <property type="protein sequence ID" value="AAL10341.1"/>
    <property type="molecule type" value="Genomic_DNA"/>
</dbReference>
<dbReference type="EMBL" id="AF413152">
    <property type="protein sequence ID" value="AAL10342.1"/>
    <property type="molecule type" value="Genomic_DNA"/>
</dbReference>
<dbReference type="EMBL" id="AF413153">
    <property type="protein sequence ID" value="AAL10343.1"/>
    <property type="molecule type" value="Genomic_DNA"/>
</dbReference>
<dbReference type="EMBL" id="AF413154">
    <property type="protein sequence ID" value="AAL10344.1"/>
    <property type="molecule type" value="Genomic_DNA"/>
</dbReference>
<dbReference type="EMBL" id="AF413155">
    <property type="protein sequence ID" value="AAL10345.1"/>
    <property type="molecule type" value="Genomic_DNA"/>
</dbReference>
<dbReference type="EMBL" id="AF413156">
    <property type="protein sequence ID" value="AAL10346.1"/>
    <property type="molecule type" value="Genomic_DNA"/>
</dbReference>
<dbReference type="EMBL" id="AF413157">
    <property type="protein sequence ID" value="AAL10347.1"/>
    <property type="molecule type" value="Genomic_DNA"/>
</dbReference>
<dbReference type="EMBL" id="AF413158">
    <property type="protein sequence ID" value="AAL10348.1"/>
    <property type="molecule type" value="Genomic_DNA"/>
</dbReference>
<dbReference type="EMBL" id="AF413159">
    <property type="protein sequence ID" value="AAL10349.1"/>
    <property type="molecule type" value="Genomic_DNA"/>
</dbReference>
<dbReference type="EMBL" id="AF413160">
    <property type="protein sequence ID" value="AAL10350.1"/>
    <property type="molecule type" value="Genomic_DNA"/>
</dbReference>
<dbReference type="EMBL" id="AF413161">
    <property type="protein sequence ID" value="AAL10351.1"/>
    <property type="molecule type" value="Genomic_DNA"/>
</dbReference>
<dbReference type="EMBL" id="AF413162">
    <property type="protein sequence ID" value="AAL10352.1"/>
    <property type="molecule type" value="Genomic_DNA"/>
</dbReference>
<dbReference type="EMBL" id="AF413163">
    <property type="protein sequence ID" value="AAL10353.1"/>
    <property type="molecule type" value="Genomic_DNA"/>
</dbReference>
<dbReference type="EMBL" id="AF413164">
    <property type="protein sequence ID" value="AAL10354.1"/>
    <property type="molecule type" value="Genomic_DNA"/>
</dbReference>
<dbReference type="EMBL" id="AF413165">
    <property type="protein sequence ID" value="AAL10355.1"/>
    <property type="molecule type" value="Genomic_DNA"/>
</dbReference>
<dbReference type="EMBL" id="AF413166">
    <property type="protein sequence ID" value="AAL10356.1"/>
    <property type="molecule type" value="Genomic_DNA"/>
</dbReference>
<dbReference type="EMBL" id="AF413167">
    <property type="protein sequence ID" value="AAL10357.1"/>
    <property type="molecule type" value="Genomic_DNA"/>
</dbReference>
<dbReference type="EMBL" id="AF413168">
    <property type="protein sequence ID" value="AAL10358.1"/>
    <property type="molecule type" value="Genomic_DNA"/>
</dbReference>
<dbReference type="EMBL" id="AF413169">
    <property type="protein sequence ID" value="AAL10359.1"/>
    <property type="molecule type" value="Genomic_DNA"/>
</dbReference>
<dbReference type="EMBL" id="AF413170">
    <property type="protein sequence ID" value="AAL10360.1"/>
    <property type="molecule type" value="Genomic_DNA"/>
</dbReference>
<dbReference type="EMBL" id="AF413171">
    <property type="protein sequence ID" value="AAL10361.1"/>
    <property type="molecule type" value="Genomic_DNA"/>
</dbReference>
<dbReference type="EMBL" id="AF413172">
    <property type="protein sequence ID" value="AAL10362.1"/>
    <property type="molecule type" value="Genomic_DNA"/>
</dbReference>
<dbReference type="EMBL" id="AF413173">
    <property type="protein sequence ID" value="AAL10363.1"/>
    <property type="molecule type" value="Genomic_DNA"/>
</dbReference>
<dbReference type="EMBL" id="AF413174">
    <property type="protein sequence ID" value="AAL10364.1"/>
    <property type="molecule type" value="Genomic_DNA"/>
</dbReference>
<dbReference type="EMBL" id="AF413175">
    <property type="protein sequence ID" value="AAL10365.1"/>
    <property type="molecule type" value="Genomic_DNA"/>
</dbReference>
<dbReference type="EMBL" id="AF413176">
    <property type="protein sequence ID" value="AAL10366.1"/>
    <property type="molecule type" value="Genomic_DNA"/>
</dbReference>
<dbReference type="EMBL" id="AF413177">
    <property type="protein sequence ID" value="AAL10367.1"/>
    <property type="molecule type" value="Genomic_DNA"/>
</dbReference>
<dbReference type="EMBL" id="AF413178">
    <property type="protein sequence ID" value="AAL10368.1"/>
    <property type="molecule type" value="Genomic_DNA"/>
</dbReference>
<dbReference type="EMBL" id="AF413179">
    <property type="protein sequence ID" value="AAL10369.1"/>
    <property type="molecule type" value="Genomic_DNA"/>
</dbReference>
<dbReference type="EMBL" id="AF413180">
    <property type="protein sequence ID" value="AAL10370.1"/>
    <property type="molecule type" value="Genomic_DNA"/>
</dbReference>
<dbReference type="EMBL" id="AF413181">
    <property type="protein sequence ID" value="AAL10371.1"/>
    <property type="molecule type" value="Genomic_DNA"/>
</dbReference>
<dbReference type="EMBL" id="AF413182">
    <property type="protein sequence ID" value="AAL10372.1"/>
    <property type="molecule type" value="Genomic_DNA"/>
</dbReference>
<dbReference type="EMBL" id="AF413183">
    <property type="protein sequence ID" value="AAL10373.1"/>
    <property type="molecule type" value="Genomic_DNA"/>
</dbReference>
<dbReference type="EMBL" id="AF413184">
    <property type="protein sequence ID" value="AAL10374.1"/>
    <property type="molecule type" value="Genomic_DNA"/>
</dbReference>
<dbReference type="EMBL" id="AF413185">
    <property type="protein sequence ID" value="AAL10375.1"/>
    <property type="molecule type" value="Genomic_DNA"/>
</dbReference>
<dbReference type="EMBL" id="AF413186">
    <property type="protein sequence ID" value="AAL10376.1"/>
    <property type="molecule type" value="Genomic_DNA"/>
</dbReference>
<dbReference type="EMBL" id="AF413187">
    <property type="protein sequence ID" value="AAL10377.1"/>
    <property type="molecule type" value="Genomic_DNA"/>
</dbReference>
<dbReference type="EMBL" id="AF413188">
    <property type="protein sequence ID" value="AAL10378.1"/>
    <property type="molecule type" value="Genomic_DNA"/>
</dbReference>
<dbReference type="EMBL" id="AF413189">
    <property type="protein sequence ID" value="AAL10379.1"/>
    <property type="molecule type" value="Genomic_DNA"/>
</dbReference>
<dbReference type="EMBL" id="AF413190">
    <property type="protein sequence ID" value="AAL10380.1"/>
    <property type="molecule type" value="Genomic_DNA"/>
</dbReference>
<dbReference type="EMBL" id="AF413191">
    <property type="protein sequence ID" value="AAL10381.1"/>
    <property type="molecule type" value="Genomic_DNA"/>
</dbReference>
<dbReference type="EMBL" id="AF413192">
    <property type="protein sequence ID" value="AAL10382.1"/>
    <property type="molecule type" value="Genomic_DNA"/>
</dbReference>
<dbReference type="EMBL" id="AF413193">
    <property type="protein sequence ID" value="AAL10383.1"/>
    <property type="molecule type" value="Genomic_DNA"/>
</dbReference>
<dbReference type="EMBL" id="AF413194">
    <property type="protein sequence ID" value="AAL10384.1"/>
    <property type="molecule type" value="Genomic_DNA"/>
</dbReference>
<dbReference type="EMBL" id="AF413195">
    <property type="protein sequence ID" value="AAL10385.1"/>
    <property type="molecule type" value="Genomic_DNA"/>
</dbReference>
<dbReference type="EMBL" id="AF413196">
    <property type="protein sequence ID" value="AAL10386.1"/>
    <property type="molecule type" value="Genomic_DNA"/>
</dbReference>
<dbReference type="EMBL" id="AF413197">
    <property type="protein sequence ID" value="AAL10387.1"/>
    <property type="molecule type" value="Genomic_DNA"/>
</dbReference>
<dbReference type="EMBL" id="AF413198">
    <property type="protein sequence ID" value="AAL10388.1"/>
    <property type="molecule type" value="Genomic_DNA"/>
</dbReference>
<dbReference type="EMBL" id="AF413199">
    <property type="protein sequence ID" value="AAL10389.1"/>
    <property type="molecule type" value="Genomic_DNA"/>
</dbReference>
<dbReference type="EMBL" id="AF413200">
    <property type="protein sequence ID" value="AAL10390.1"/>
    <property type="molecule type" value="Genomic_DNA"/>
</dbReference>
<dbReference type="EMBL" id="AF413201">
    <property type="protein sequence ID" value="AAL10391.1"/>
    <property type="molecule type" value="Genomic_DNA"/>
</dbReference>
<dbReference type="EMBL" id="AF413202">
    <property type="protein sequence ID" value="AAL10392.1"/>
    <property type="molecule type" value="Genomic_DNA"/>
</dbReference>
<dbReference type="EMBL" id="AF413203">
    <property type="protein sequence ID" value="AAL10393.1"/>
    <property type="molecule type" value="Genomic_DNA"/>
</dbReference>
<dbReference type="EMBL" id="AF377621">
    <property type="protein sequence ID" value="AAK59901.1"/>
    <property type="molecule type" value="Genomic_DNA"/>
</dbReference>
<dbReference type="EMBL" id="AF377622">
    <property type="protein sequence ID" value="AAK59902.1"/>
    <property type="molecule type" value="Genomic_DNA"/>
</dbReference>
<dbReference type="EMBL" id="AF377623">
    <property type="protein sequence ID" value="AAK59903.1"/>
    <property type="molecule type" value="Genomic_DNA"/>
</dbReference>
<dbReference type="EMBL" id="AF377624">
    <property type="protein sequence ID" value="AAK59904.1"/>
    <property type="molecule type" value="Genomic_DNA"/>
</dbReference>
<dbReference type="EMBL" id="AF377625">
    <property type="protein sequence ID" value="AAK59905.1"/>
    <property type="molecule type" value="Genomic_DNA"/>
</dbReference>
<dbReference type="EMBL" id="AF377626">
    <property type="protein sequence ID" value="AAK59906.1"/>
    <property type="molecule type" value="Genomic_DNA"/>
</dbReference>
<dbReference type="EMBL" id="AF377627">
    <property type="protein sequence ID" value="AAK59907.1"/>
    <property type="molecule type" value="Genomic_DNA"/>
</dbReference>
<dbReference type="EMBL" id="AF377628">
    <property type="protein sequence ID" value="AAK59908.1"/>
    <property type="molecule type" value="Genomic_DNA"/>
</dbReference>
<dbReference type="EMBL" id="AF377629">
    <property type="protein sequence ID" value="AAK59909.1"/>
    <property type="molecule type" value="Genomic_DNA"/>
</dbReference>
<dbReference type="EMBL" id="AF377630">
    <property type="protein sequence ID" value="AAK59910.1"/>
    <property type="molecule type" value="Genomic_DNA"/>
</dbReference>
<dbReference type="EMBL" id="AF377631">
    <property type="protein sequence ID" value="AAK59911.1"/>
    <property type="molecule type" value="Genomic_DNA"/>
</dbReference>
<dbReference type="EMBL" id="AF377632">
    <property type="protein sequence ID" value="AAK59912.1"/>
    <property type="molecule type" value="Genomic_DNA"/>
</dbReference>
<dbReference type="EMBL" id="AF377633">
    <property type="protein sequence ID" value="AAK59913.1"/>
    <property type="molecule type" value="Genomic_DNA"/>
</dbReference>
<dbReference type="EMBL" id="AF377634">
    <property type="protein sequence ID" value="AAK59914.1"/>
    <property type="molecule type" value="Genomic_DNA"/>
</dbReference>
<dbReference type="EMBL" id="AF377635">
    <property type="protein sequence ID" value="AAK59915.1"/>
    <property type="molecule type" value="Genomic_DNA"/>
</dbReference>
<dbReference type="EMBL" id="AF377636">
    <property type="protein sequence ID" value="AAK59916.1"/>
    <property type="molecule type" value="Genomic_DNA"/>
</dbReference>
<dbReference type="EMBL" id="AF377637">
    <property type="protein sequence ID" value="AAK59917.1"/>
    <property type="molecule type" value="Genomic_DNA"/>
</dbReference>
<dbReference type="EMBL" id="AF377638">
    <property type="protein sequence ID" value="AAK59918.1"/>
    <property type="molecule type" value="Genomic_DNA"/>
</dbReference>
<dbReference type="EMBL" id="AF377639">
    <property type="protein sequence ID" value="AAK59919.1"/>
    <property type="molecule type" value="Genomic_DNA"/>
</dbReference>
<dbReference type="EMBL" id="AF377640">
    <property type="protein sequence ID" value="AAK59920.1"/>
    <property type="molecule type" value="Genomic_DNA"/>
</dbReference>
<dbReference type="EMBL" id="AF377641">
    <property type="protein sequence ID" value="AAK59921.1"/>
    <property type="molecule type" value="Genomic_DNA"/>
</dbReference>
<dbReference type="EMBL" id="AF377642">
    <property type="protein sequence ID" value="AAK59922.1"/>
    <property type="molecule type" value="Genomic_DNA"/>
</dbReference>
<dbReference type="EMBL" id="AF377643">
    <property type="protein sequence ID" value="AAK59923.1"/>
    <property type="molecule type" value="Genomic_DNA"/>
</dbReference>
<dbReference type="EMBL" id="AF377644">
    <property type="protein sequence ID" value="AAK59924.1"/>
    <property type="molecule type" value="Genomic_DNA"/>
</dbReference>
<dbReference type="EMBL" id="AF377645">
    <property type="protein sequence ID" value="AAK59925.1"/>
    <property type="molecule type" value="Genomic_DNA"/>
</dbReference>
<dbReference type="EMBL" id="DR799058">
    <property type="status" value="NOT_ANNOTATED_CDS"/>
    <property type="molecule type" value="mRNA"/>
</dbReference>
<dbReference type="SMR" id="Q9ST48"/>
<dbReference type="FunCoup" id="Q9ST48">
    <property type="interactions" value="1919"/>
</dbReference>
<dbReference type="STRING" id="4577.Q9ST48"/>
<dbReference type="PaxDb" id="4577-GRMZM2G144744_P01"/>
<dbReference type="EnsemblPlants" id="Zm00001eb054480_T001">
    <property type="protein sequence ID" value="Zm00001eb054480_P001"/>
    <property type="gene ID" value="Zm00001eb054480"/>
</dbReference>
<dbReference type="Gramene" id="Zm00001eb054480_T001">
    <property type="protein sequence ID" value="Zm00001eb054480_P001"/>
    <property type="gene ID" value="Zm00001eb054480"/>
</dbReference>
<dbReference type="MaizeGDB" id="12143"/>
<dbReference type="eggNOG" id="ENOG502QPMG">
    <property type="taxonomic scope" value="Eukaryota"/>
</dbReference>
<dbReference type="InParanoid" id="Q9ST48"/>
<dbReference type="OMA" id="PMLASSQ"/>
<dbReference type="OrthoDB" id="761920at2759"/>
<dbReference type="Proteomes" id="UP000007305">
    <property type="component" value="Chromosome 1"/>
</dbReference>
<dbReference type="ExpressionAtlas" id="Q9ST48">
    <property type="expression patterns" value="baseline and differential"/>
</dbReference>
<dbReference type="GO" id="GO:0005634">
    <property type="term" value="C:nucleus"/>
    <property type="evidence" value="ECO:0000318"/>
    <property type="project" value="GO_Central"/>
</dbReference>
<dbReference type="GO" id="GO:0003700">
    <property type="term" value="F:DNA-binding transcription factor activity"/>
    <property type="evidence" value="ECO:0000318"/>
    <property type="project" value="GO_Central"/>
</dbReference>
<dbReference type="GO" id="GO:0043565">
    <property type="term" value="F:sequence-specific DNA binding"/>
    <property type="evidence" value="ECO:0000318"/>
    <property type="project" value="GO_Central"/>
</dbReference>
<dbReference type="GO" id="GO:0009740">
    <property type="term" value="P:gibberellic acid mediated signaling pathway"/>
    <property type="evidence" value="ECO:0007669"/>
    <property type="project" value="UniProtKB-KW"/>
</dbReference>
<dbReference type="GO" id="GO:0006355">
    <property type="term" value="P:regulation of DNA-templated transcription"/>
    <property type="evidence" value="ECO:0000318"/>
    <property type="project" value="GO_Central"/>
</dbReference>
<dbReference type="FunFam" id="1.10.10.1290:FF:000001">
    <property type="entry name" value="DELLA protein GAI"/>
    <property type="match status" value="1"/>
</dbReference>
<dbReference type="Gene3D" id="1.10.10.1290">
    <property type="entry name" value="Transcriptional regulator DELLA, N-terminal domain"/>
    <property type="match status" value="1"/>
</dbReference>
<dbReference type="InterPro" id="IPR038088">
    <property type="entry name" value="DELLA_N_sf"/>
</dbReference>
<dbReference type="InterPro" id="IPR021914">
    <property type="entry name" value="TF_DELLA_N"/>
</dbReference>
<dbReference type="InterPro" id="IPR005202">
    <property type="entry name" value="TF_GRAS"/>
</dbReference>
<dbReference type="PANTHER" id="PTHR31636">
    <property type="entry name" value="OSJNBA0084A10.13 PROTEIN-RELATED"/>
    <property type="match status" value="1"/>
</dbReference>
<dbReference type="Pfam" id="PF12041">
    <property type="entry name" value="DELLA"/>
    <property type="match status" value="1"/>
</dbReference>
<dbReference type="Pfam" id="PF03514">
    <property type="entry name" value="GRAS"/>
    <property type="match status" value="1"/>
</dbReference>
<dbReference type="SMART" id="SM01129">
    <property type="entry name" value="DELLA"/>
    <property type="match status" value="1"/>
</dbReference>
<dbReference type="PROSITE" id="PS50985">
    <property type="entry name" value="GRAS"/>
    <property type="match status" value="1"/>
</dbReference>